<gene>
    <name evidence="1" type="primary">rplM</name>
    <name type="ordered locus">VF_2222</name>
</gene>
<dbReference type="EMBL" id="CP000020">
    <property type="protein sequence ID" value="AAW86717.1"/>
    <property type="molecule type" value="Genomic_DNA"/>
</dbReference>
<dbReference type="RefSeq" id="WP_005420958.1">
    <property type="nucleotide sequence ID" value="NZ_CAWLES010000001.1"/>
</dbReference>
<dbReference type="RefSeq" id="YP_205605.1">
    <property type="nucleotide sequence ID" value="NC_006840.2"/>
</dbReference>
<dbReference type="SMR" id="Q5E2M9"/>
<dbReference type="STRING" id="312309.VF_2222"/>
<dbReference type="EnsemblBacteria" id="AAW86717">
    <property type="protein sequence ID" value="AAW86717"/>
    <property type="gene ID" value="VF_2222"/>
</dbReference>
<dbReference type="GeneID" id="54164938"/>
<dbReference type="KEGG" id="vfi:VF_2222"/>
<dbReference type="PATRIC" id="fig|312309.11.peg.2260"/>
<dbReference type="eggNOG" id="COG0102">
    <property type="taxonomic scope" value="Bacteria"/>
</dbReference>
<dbReference type="HOGENOM" id="CLU_082184_2_2_6"/>
<dbReference type="OrthoDB" id="9801330at2"/>
<dbReference type="Proteomes" id="UP000000537">
    <property type="component" value="Chromosome I"/>
</dbReference>
<dbReference type="GO" id="GO:0022625">
    <property type="term" value="C:cytosolic large ribosomal subunit"/>
    <property type="evidence" value="ECO:0007669"/>
    <property type="project" value="TreeGrafter"/>
</dbReference>
<dbReference type="GO" id="GO:0003729">
    <property type="term" value="F:mRNA binding"/>
    <property type="evidence" value="ECO:0007669"/>
    <property type="project" value="TreeGrafter"/>
</dbReference>
<dbReference type="GO" id="GO:0003735">
    <property type="term" value="F:structural constituent of ribosome"/>
    <property type="evidence" value="ECO:0007669"/>
    <property type="project" value="InterPro"/>
</dbReference>
<dbReference type="GO" id="GO:0017148">
    <property type="term" value="P:negative regulation of translation"/>
    <property type="evidence" value="ECO:0007669"/>
    <property type="project" value="TreeGrafter"/>
</dbReference>
<dbReference type="GO" id="GO:0006412">
    <property type="term" value="P:translation"/>
    <property type="evidence" value="ECO:0007669"/>
    <property type="project" value="UniProtKB-UniRule"/>
</dbReference>
<dbReference type="CDD" id="cd00392">
    <property type="entry name" value="Ribosomal_L13"/>
    <property type="match status" value="1"/>
</dbReference>
<dbReference type="FunFam" id="3.90.1180.10:FF:000001">
    <property type="entry name" value="50S ribosomal protein L13"/>
    <property type="match status" value="1"/>
</dbReference>
<dbReference type="Gene3D" id="3.90.1180.10">
    <property type="entry name" value="Ribosomal protein L13"/>
    <property type="match status" value="1"/>
</dbReference>
<dbReference type="HAMAP" id="MF_01366">
    <property type="entry name" value="Ribosomal_uL13"/>
    <property type="match status" value="1"/>
</dbReference>
<dbReference type="InterPro" id="IPR005822">
    <property type="entry name" value="Ribosomal_uL13"/>
</dbReference>
<dbReference type="InterPro" id="IPR005823">
    <property type="entry name" value="Ribosomal_uL13_bac-type"/>
</dbReference>
<dbReference type="InterPro" id="IPR023563">
    <property type="entry name" value="Ribosomal_uL13_CS"/>
</dbReference>
<dbReference type="InterPro" id="IPR036899">
    <property type="entry name" value="Ribosomal_uL13_sf"/>
</dbReference>
<dbReference type="NCBIfam" id="TIGR01066">
    <property type="entry name" value="rplM_bact"/>
    <property type="match status" value="1"/>
</dbReference>
<dbReference type="PANTHER" id="PTHR11545:SF2">
    <property type="entry name" value="LARGE RIBOSOMAL SUBUNIT PROTEIN UL13M"/>
    <property type="match status" value="1"/>
</dbReference>
<dbReference type="PANTHER" id="PTHR11545">
    <property type="entry name" value="RIBOSOMAL PROTEIN L13"/>
    <property type="match status" value="1"/>
</dbReference>
<dbReference type="Pfam" id="PF00572">
    <property type="entry name" value="Ribosomal_L13"/>
    <property type="match status" value="1"/>
</dbReference>
<dbReference type="PIRSF" id="PIRSF002181">
    <property type="entry name" value="Ribosomal_L13"/>
    <property type="match status" value="1"/>
</dbReference>
<dbReference type="SUPFAM" id="SSF52161">
    <property type="entry name" value="Ribosomal protein L13"/>
    <property type="match status" value="1"/>
</dbReference>
<dbReference type="PROSITE" id="PS00783">
    <property type="entry name" value="RIBOSOMAL_L13"/>
    <property type="match status" value="1"/>
</dbReference>
<keyword id="KW-1185">Reference proteome</keyword>
<keyword id="KW-0687">Ribonucleoprotein</keyword>
<keyword id="KW-0689">Ribosomal protein</keyword>
<evidence type="ECO:0000255" key="1">
    <source>
        <dbReference type="HAMAP-Rule" id="MF_01366"/>
    </source>
</evidence>
<evidence type="ECO:0000305" key="2"/>
<reference key="1">
    <citation type="journal article" date="2005" name="Proc. Natl. Acad. Sci. U.S.A.">
        <title>Complete genome sequence of Vibrio fischeri: a symbiotic bacterium with pathogenic congeners.</title>
        <authorList>
            <person name="Ruby E.G."/>
            <person name="Urbanowski M."/>
            <person name="Campbell J."/>
            <person name="Dunn A."/>
            <person name="Faini M."/>
            <person name="Gunsalus R."/>
            <person name="Lostroh P."/>
            <person name="Lupp C."/>
            <person name="McCann J."/>
            <person name="Millikan D."/>
            <person name="Schaefer A."/>
            <person name="Stabb E."/>
            <person name="Stevens A."/>
            <person name="Visick K."/>
            <person name="Whistler C."/>
            <person name="Greenberg E.P."/>
        </authorList>
    </citation>
    <scope>NUCLEOTIDE SEQUENCE [LARGE SCALE GENOMIC DNA]</scope>
    <source>
        <strain>ATCC 700601 / ES114</strain>
    </source>
</reference>
<comment type="function">
    <text evidence="1">This protein is one of the early assembly proteins of the 50S ribosomal subunit, although it is not seen to bind rRNA by itself. It is important during the early stages of 50S assembly.</text>
</comment>
<comment type="subunit">
    <text evidence="1">Part of the 50S ribosomal subunit.</text>
</comment>
<comment type="similarity">
    <text evidence="1">Belongs to the universal ribosomal protein uL13 family.</text>
</comment>
<proteinExistence type="inferred from homology"/>
<sequence>MKTFVAKPAAVKRDWYVVDAEGKTLGRIATEIASRLRGKHKAEYTPHVDTGDYIIVINAEKVRVTGKKASDKIYYRHSEFPGGLKSISFEKLIDRKPEMVIELAVKGMLPRGPLGRAMYRKLKVYAGAEHNHTAQQPQVLDI</sequence>
<feature type="chain" id="PRO_0000261821" description="Large ribosomal subunit protein uL13">
    <location>
        <begin position="1"/>
        <end position="142"/>
    </location>
</feature>
<name>RL13_ALIF1</name>
<protein>
    <recommendedName>
        <fullName evidence="1">Large ribosomal subunit protein uL13</fullName>
    </recommendedName>
    <alternativeName>
        <fullName evidence="2">50S ribosomal protein L13</fullName>
    </alternativeName>
</protein>
<accession>Q5E2M9</accession>
<organism>
    <name type="scientific">Aliivibrio fischeri (strain ATCC 700601 / ES114)</name>
    <name type="common">Vibrio fischeri</name>
    <dbReference type="NCBI Taxonomy" id="312309"/>
    <lineage>
        <taxon>Bacteria</taxon>
        <taxon>Pseudomonadati</taxon>
        <taxon>Pseudomonadota</taxon>
        <taxon>Gammaproteobacteria</taxon>
        <taxon>Vibrionales</taxon>
        <taxon>Vibrionaceae</taxon>
        <taxon>Aliivibrio</taxon>
    </lineage>
</organism>